<comment type="function">
    <text evidence="1">Is involved in L-lactate degradation and allows cells to grow with lactate as the sole carbon source. Has probably a role as an electron transporter during oxidation of L-lactate.</text>
</comment>
<comment type="similarity">
    <text evidence="1">Belongs to the LutB/YkgF family.</text>
</comment>
<sequence>MAIKISDAPFSKRVEKGLQDGFMRQAVSSAQERLKTSKGSAEKELGNWEEWRTLAEEIRSHTLNHIDFYLHQLSENVEKAGGHVYFAQTAEEANQYIKEIVSSKEAQKVVKSKSMVTEEISMNKALEDIGCEVIETDLGEYILQIDDHDPPSHIVAPALHKNKEQIRDTFKARKGYTKSENPQELTLFAREQLRKEFLSADVGITGCNFAVAESGSISLVTNEGNARLATALPKTHIAVMGMERIVPTWEELDILVSMLCRSAVGQKLTSYVTGLTGPREDGDADGPEEFHLVIVDNGRSNILGTEFQAALHCIRCAACINVCPVYRHVGGHSYGSIYPGPIGAVLTPLLEGYEDHKELPYASSLCAACTDACPVKIPLHELLIKHRRVIAEQKRTARTEALAMKGFGIGASSPMLYKAGTKVVPFLLFPFVKDGAIPKGPGPLKGWTDVRHLPAPAKERFRDWFKARQKEGAHD</sequence>
<feature type="chain" id="PRO_0000383977" description="Lactate utilization protein B">
    <location>
        <begin position="1"/>
        <end position="475"/>
    </location>
</feature>
<feature type="domain" description="4Fe-4S ferredoxin-type 1" evidence="1">
    <location>
        <begin position="304"/>
        <end position="334"/>
    </location>
</feature>
<feature type="domain" description="4Fe-4S ferredoxin-type 2" evidence="1">
    <location>
        <begin position="353"/>
        <end position="382"/>
    </location>
</feature>
<feature type="binding site" evidence="1">
    <location>
        <position position="313"/>
    </location>
    <ligand>
        <name>[4Fe-4S] cluster</name>
        <dbReference type="ChEBI" id="CHEBI:49883"/>
        <label>1</label>
    </ligand>
</feature>
<feature type="binding site" evidence="1">
    <location>
        <position position="316"/>
    </location>
    <ligand>
        <name>[4Fe-4S] cluster</name>
        <dbReference type="ChEBI" id="CHEBI:49883"/>
        <label>1</label>
    </ligand>
</feature>
<feature type="binding site" evidence="1">
    <location>
        <position position="319"/>
    </location>
    <ligand>
        <name>[4Fe-4S] cluster</name>
        <dbReference type="ChEBI" id="CHEBI:49883"/>
        <label>1</label>
    </ligand>
</feature>
<feature type="binding site" evidence="1">
    <location>
        <position position="323"/>
    </location>
    <ligand>
        <name>[4Fe-4S] cluster</name>
        <dbReference type="ChEBI" id="CHEBI:49883"/>
        <label>2</label>
    </ligand>
</feature>
<feature type="binding site" evidence="1">
    <location>
        <position position="366"/>
    </location>
    <ligand>
        <name>[4Fe-4S] cluster</name>
        <dbReference type="ChEBI" id="CHEBI:49883"/>
        <label>2</label>
    </ligand>
</feature>
<feature type="binding site" evidence="1">
    <location>
        <position position="369"/>
    </location>
    <ligand>
        <name>[4Fe-4S] cluster</name>
        <dbReference type="ChEBI" id="CHEBI:49883"/>
        <label>2</label>
    </ligand>
</feature>
<feature type="binding site" evidence="1">
    <location>
        <position position="373"/>
    </location>
    <ligand>
        <name>[4Fe-4S] cluster</name>
        <dbReference type="ChEBI" id="CHEBI:49883"/>
        <label>1</label>
    </ligand>
</feature>
<gene>
    <name evidence="1" type="primary">lutB</name>
    <name type="ordered locus">ABC0976</name>
</gene>
<reference key="1">
    <citation type="submission" date="2003-10" db="EMBL/GenBank/DDBJ databases">
        <title>The complete genome sequence of the alkaliphilic Bacillus clausii KSM-K16.</title>
        <authorList>
            <person name="Takaki Y."/>
            <person name="Kageyama Y."/>
            <person name="Shimamura S."/>
            <person name="Suzuki H."/>
            <person name="Nishi S."/>
            <person name="Hatada Y."/>
            <person name="Kawai S."/>
            <person name="Ito S."/>
            <person name="Horikoshi K."/>
        </authorList>
    </citation>
    <scope>NUCLEOTIDE SEQUENCE [LARGE SCALE GENOMIC DNA]</scope>
    <source>
        <strain>KSM-K16</strain>
    </source>
</reference>
<keyword id="KW-0004">4Fe-4S</keyword>
<keyword id="KW-0249">Electron transport</keyword>
<keyword id="KW-0408">Iron</keyword>
<keyword id="KW-0411">Iron-sulfur</keyword>
<keyword id="KW-0479">Metal-binding</keyword>
<keyword id="KW-1185">Reference proteome</keyword>
<keyword id="KW-0677">Repeat</keyword>
<keyword id="KW-0813">Transport</keyword>
<proteinExistence type="inferred from homology"/>
<protein>
    <recommendedName>
        <fullName evidence="1">Lactate utilization protein B</fullName>
    </recommendedName>
</protein>
<evidence type="ECO:0000255" key="1">
    <source>
        <dbReference type="HAMAP-Rule" id="MF_02103"/>
    </source>
</evidence>
<organism>
    <name type="scientific">Shouchella clausii (strain KSM-K16)</name>
    <name type="common">Alkalihalobacillus clausii</name>
    <dbReference type="NCBI Taxonomy" id="66692"/>
    <lineage>
        <taxon>Bacteria</taxon>
        <taxon>Bacillati</taxon>
        <taxon>Bacillota</taxon>
        <taxon>Bacilli</taxon>
        <taxon>Bacillales</taxon>
        <taxon>Bacillaceae</taxon>
        <taxon>Shouchella</taxon>
    </lineage>
</organism>
<accession>Q5WJE0</accession>
<dbReference type="EMBL" id="AP006627">
    <property type="protein sequence ID" value="BAD63515.1"/>
    <property type="molecule type" value="Genomic_DNA"/>
</dbReference>
<dbReference type="RefSeq" id="WP_011245831.1">
    <property type="nucleotide sequence ID" value="NC_006582.1"/>
</dbReference>
<dbReference type="STRING" id="66692.ABC0976"/>
<dbReference type="KEGG" id="bcl:ABC0976"/>
<dbReference type="eggNOG" id="COG1139">
    <property type="taxonomic scope" value="Bacteria"/>
</dbReference>
<dbReference type="HOGENOM" id="CLU_027059_2_0_9"/>
<dbReference type="OrthoDB" id="9782337at2"/>
<dbReference type="Proteomes" id="UP000001168">
    <property type="component" value="Chromosome"/>
</dbReference>
<dbReference type="GO" id="GO:0051539">
    <property type="term" value="F:4 iron, 4 sulfur cluster binding"/>
    <property type="evidence" value="ECO:0007669"/>
    <property type="project" value="UniProtKB-KW"/>
</dbReference>
<dbReference type="GO" id="GO:0046872">
    <property type="term" value="F:metal ion binding"/>
    <property type="evidence" value="ECO:0007669"/>
    <property type="project" value="UniProtKB-KW"/>
</dbReference>
<dbReference type="GO" id="GO:0006089">
    <property type="term" value="P:lactate metabolic process"/>
    <property type="evidence" value="ECO:0007669"/>
    <property type="project" value="UniProtKB-UniRule"/>
</dbReference>
<dbReference type="Gene3D" id="1.10.1060.10">
    <property type="entry name" value="Alpha-helical ferredoxin"/>
    <property type="match status" value="1"/>
</dbReference>
<dbReference type="Gene3D" id="3.40.50.10420">
    <property type="entry name" value="NagB/RpiA/CoA transferase-like"/>
    <property type="match status" value="1"/>
</dbReference>
<dbReference type="HAMAP" id="MF_02103">
    <property type="entry name" value="LutB"/>
    <property type="match status" value="1"/>
</dbReference>
<dbReference type="InterPro" id="IPR017896">
    <property type="entry name" value="4Fe4S_Fe-S-bd"/>
</dbReference>
<dbReference type="InterPro" id="IPR017900">
    <property type="entry name" value="4Fe4S_Fe_S_CS"/>
</dbReference>
<dbReference type="InterPro" id="IPR024185">
    <property type="entry name" value="FTHF_cligase-like_sf"/>
</dbReference>
<dbReference type="InterPro" id="IPR009051">
    <property type="entry name" value="Helical_ferredxn"/>
</dbReference>
<dbReference type="InterPro" id="IPR003741">
    <property type="entry name" value="LUD_dom"/>
</dbReference>
<dbReference type="InterPro" id="IPR022825">
    <property type="entry name" value="LutB"/>
</dbReference>
<dbReference type="InterPro" id="IPR004452">
    <property type="entry name" value="LutB/LldF"/>
</dbReference>
<dbReference type="InterPro" id="IPR024569">
    <property type="entry name" value="LutB_C"/>
</dbReference>
<dbReference type="InterPro" id="IPR037171">
    <property type="entry name" value="NagB/RpiA_transferase-like"/>
</dbReference>
<dbReference type="NCBIfam" id="TIGR00273">
    <property type="entry name" value="LutB/LldF family L-lactate oxidation iron-sulfur protein"/>
    <property type="match status" value="1"/>
</dbReference>
<dbReference type="PANTHER" id="PTHR47153">
    <property type="entry name" value="LACTATE UTILIZATION PROTEIN B"/>
    <property type="match status" value="1"/>
</dbReference>
<dbReference type="PANTHER" id="PTHR47153:SF2">
    <property type="entry name" value="LACTATE UTILIZATION PROTEIN B"/>
    <property type="match status" value="1"/>
</dbReference>
<dbReference type="Pfam" id="PF13183">
    <property type="entry name" value="Fer4_8"/>
    <property type="match status" value="1"/>
</dbReference>
<dbReference type="Pfam" id="PF02589">
    <property type="entry name" value="LUD_dom"/>
    <property type="match status" value="1"/>
</dbReference>
<dbReference type="Pfam" id="PF11870">
    <property type="entry name" value="LutB_C"/>
    <property type="match status" value="1"/>
</dbReference>
<dbReference type="SUPFAM" id="SSF46548">
    <property type="entry name" value="alpha-helical ferredoxin"/>
    <property type="match status" value="1"/>
</dbReference>
<dbReference type="SUPFAM" id="SSF100950">
    <property type="entry name" value="NagB/RpiA/CoA transferase-like"/>
    <property type="match status" value="1"/>
</dbReference>
<dbReference type="PROSITE" id="PS00198">
    <property type="entry name" value="4FE4S_FER_1"/>
    <property type="match status" value="1"/>
</dbReference>
<name>LUTB_SHOC1</name>